<proteinExistence type="inferred from homology"/>
<sequence length="249" mass="27014">MTTPDGIVSALAVALARQSESHADCPLFNDPYAQVFIDAALSRGCQLPSDETSERINGIANYASSRTKWFDEYFIAAGAHGLEQMVIVAAGLDARAWRLPWVAGTTLFEIDHPGVLKFKNEALHEHGESPSVSRYVPVPADLSDGWSERLRDAGFDVSEPTAWAVEGLLPYVADGPHLLFDRIHEISPAGSRLAVEAVGTGVADWLSTQGWQVTVIGAQELMTRYGRCGDHSDTDAGMDTVFVNATRDR</sequence>
<dbReference type="EC" id="2.1.1.-"/>
<dbReference type="EMBL" id="CP000580">
    <property type="protein sequence ID" value="ABN96382.1"/>
    <property type="molecule type" value="Genomic_DNA"/>
</dbReference>
<dbReference type="SMR" id="A3PU05"/>
<dbReference type="KEGG" id="mjl:Mjls_0570"/>
<dbReference type="HOGENOM" id="CLU_056160_2_1_11"/>
<dbReference type="BioCyc" id="MSP164757:G1G8C-577-MONOMER"/>
<dbReference type="GO" id="GO:0008168">
    <property type="term" value="F:methyltransferase activity"/>
    <property type="evidence" value="ECO:0007669"/>
    <property type="project" value="UniProtKB-KW"/>
</dbReference>
<dbReference type="GO" id="GO:0032259">
    <property type="term" value="P:methylation"/>
    <property type="evidence" value="ECO:0007669"/>
    <property type="project" value="UniProtKB-KW"/>
</dbReference>
<dbReference type="Gene3D" id="3.40.50.150">
    <property type="entry name" value="Vaccinia Virus protein VP39"/>
    <property type="match status" value="1"/>
</dbReference>
<dbReference type="InterPro" id="IPR007213">
    <property type="entry name" value="Ppm1/Ppm2/Tcmp"/>
</dbReference>
<dbReference type="InterPro" id="IPR029063">
    <property type="entry name" value="SAM-dependent_MTases_sf"/>
</dbReference>
<dbReference type="InterPro" id="IPR011610">
    <property type="entry name" value="SAM_mthyl_Trfase_ML2640-like"/>
</dbReference>
<dbReference type="NCBIfam" id="TIGR00027">
    <property type="entry name" value="mthyl_TIGR00027"/>
    <property type="match status" value="1"/>
</dbReference>
<dbReference type="PANTHER" id="PTHR43619">
    <property type="entry name" value="S-ADENOSYL-L-METHIONINE-DEPENDENT METHYLTRANSFERASE YKTD-RELATED"/>
    <property type="match status" value="1"/>
</dbReference>
<dbReference type="PANTHER" id="PTHR43619:SF2">
    <property type="entry name" value="S-ADENOSYL-L-METHIONINE-DEPENDENT METHYLTRANSFERASES SUPERFAMILY PROTEIN"/>
    <property type="match status" value="1"/>
</dbReference>
<dbReference type="Pfam" id="PF04072">
    <property type="entry name" value="LCM"/>
    <property type="match status" value="1"/>
</dbReference>
<dbReference type="SUPFAM" id="SSF53335">
    <property type="entry name" value="S-adenosyl-L-methionine-dependent methyltransferases"/>
    <property type="match status" value="1"/>
</dbReference>
<reference key="1">
    <citation type="submission" date="2007-02" db="EMBL/GenBank/DDBJ databases">
        <title>Complete sequence of Mycobacterium sp. JLS.</title>
        <authorList>
            <consortium name="US DOE Joint Genome Institute"/>
            <person name="Copeland A."/>
            <person name="Lucas S."/>
            <person name="Lapidus A."/>
            <person name="Barry K."/>
            <person name="Detter J.C."/>
            <person name="Glavina del Rio T."/>
            <person name="Hammon N."/>
            <person name="Israni S."/>
            <person name="Dalin E."/>
            <person name="Tice H."/>
            <person name="Pitluck S."/>
            <person name="Chain P."/>
            <person name="Malfatti S."/>
            <person name="Shin M."/>
            <person name="Vergez L."/>
            <person name="Schmutz J."/>
            <person name="Larimer F."/>
            <person name="Land M."/>
            <person name="Hauser L."/>
            <person name="Kyrpides N."/>
            <person name="Mikhailova N."/>
            <person name="Miller C.D."/>
            <person name="Anderson A.J."/>
            <person name="Sims R.C."/>
            <person name="Richardson P."/>
        </authorList>
    </citation>
    <scope>NUCLEOTIDE SEQUENCE [LARGE SCALE GENOMIC DNA]</scope>
    <source>
        <strain>JLS</strain>
    </source>
</reference>
<organism>
    <name type="scientific">Mycobacterium sp. (strain JLS)</name>
    <dbReference type="NCBI Taxonomy" id="164757"/>
    <lineage>
        <taxon>Bacteria</taxon>
        <taxon>Bacillati</taxon>
        <taxon>Actinomycetota</taxon>
        <taxon>Actinomycetes</taxon>
        <taxon>Mycobacteriales</taxon>
        <taxon>Mycobacteriaceae</taxon>
        <taxon>Mycobacterium</taxon>
    </lineage>
</organism>
<name>Y570_MYCSJ</name>
<comment type="function">
    <text evidence="1">Exhibits S-adenosyl-L-methionine-dependent methyltransferase activity.</text>
</comment>
<comment type="similarity">
    <text evidence="2">Belongs to the UPF0677 family.</text>
</comment>
<gene>
    <name type="ordered locus">Mjls_0570</name>
</gene>
<protein>
    <recommendedName>
        <fullName>Putative S-adenosyl-L-methionine-dependent methyltransferase Mjls_0570</fullName>
        <ecNumber>2.1.1.-</ecNumber>
    </recommendedName>
</protein>
<feature type="chain" id="PRO_0000361207" description="Putative S-adenosyl-L-methionine-dependent methyltransferase Mjls_0570">
    <location>
        <begin position="1"/>
        <end position="249"/>
    </location>
</feature>
<feature type="binding site" evidence="1">
    <location>
        <position position="111"/>
    </location>
    <ligand>
        <name>S-adenosyl-L-methionine</name>
        <dbReference type="ChEBI" id="CHEBI:59789"/>
    </ligand>
</feature>
<feature type="binding site" evidence="1">
    <location>
        <begin position="141"/>
        <end position="142"/>
    </location>
    <ligand>
        <name>S-adenosyl-L-methionine</name>
        <dbReference type="ChEBI" id="CHEBI:59789"/>
    </ligand>
</feature>
<keyword id="KW-0489">Methyltransferase</keyword>
<keyword id="KW-0949">S-adenosyl-L-methionine</keyword>
<keyword id="KW-0808">Transferase</keyword>
<evidence type="ECO:0000250" key="1"/>
<evidence type="ECO:0000305" key="2"/>
<accession>A3PU05</accession>